<dbReference type="EMBL" id="DQ373065">
    <property type="protein sequence ID" value="ABD19497.1"/>
    <property type="molecule type" value="Genomic_RNA"/>
</dbReference>
<dbReference type="SMR" id="Q1A245"/>
<dbReference type="Proteomes" id="UP000008436">
    <property type="component" value="Segment"/>
</dbReference>
<dbReference type="GO" id="GO:0030430">
    <property type="term" value="C:host cell cytoplasm"/>
    <property type="evidence" value="ECO:0007669"/>
    <property type="project" value="UniProtKB-SubCell"/>
</dbReference>
<dbReference type="GO" id="GO:0044196">
    <property type="term" value="C:host cell nucleolus"/>
    <property type="evidence" value="ECO:0007669"/>
    <property type="project" value="UniProtKB-SubCell"/>
</dbReference>
<dbReference type="GO" id="GO:0003700">
    <property type="term" value="F:DNA-binding transcription factor activity"/>
    <property type="evidence" value="ECO:0007669"/>
    <property type="project" value="UniProtKB-UniRule"/>
</dbReference>
<dbReference type="GO" id="GO:0003723">
    <property type="term" value="F:RNA binding"/>
    <property type="evidence" value="ECO:0007669"/>
    <property type="project" value="UniProtKB-UniRule"/>
</dbReference>
<dbReference type="GO" id="GO:0051028">
    <property type="term" value="P:mRNA transport"/>
    <property type="evidence" value="ECO:0007669"/>
    <property type="project" value="UniProtKB-UniRule"/>
</dbReference>
<dbReference type="GO" id="GO:0016032">
    <property type="term" value="P:viral process"/>
    <property type="evidence" value="ECO:0007669"/>
    <property type="project" value="UniProtKB-UniRule"/>
</dbReference>
<dbReference type="Gene3D" id="6.10.140.630">
    <property type="match status" value="1"/>
</dbReference>
<dbReference type="HAMAP" id="MF_04077">
    <property type="entry name" value="REV_HIV1"/>
    <property type="match status" value="1"/>
</dbReference>
<dbReference type="InterPro" id="IPR000625">
    <property type="entry name" value="REV_protein"/>
</dbReference>
<dbReference type="Pfam" id="PF00424">
    <property type="entry name" value="REV"/>
    <property type="match status" value="1"/>
</dbReference>
<proteinExistence type="inferred from homology"/>
<organismHost>
    <name type="scientific">Pan troglodytes</name>
    <name type="common">Chimpanzee</name>
    <dbReference type="NCBI Taxonomy" id="9598"/>
</organismHost>
<gene>
    <name evidence="1" type="primary">rev</name>
</gene>
<keyword id="KW-0014">AIDS</keyword>
<keyword id="KW-1035">Host cytoplasm</keyword>
<keyword id="KW-1048">Host nucleus</keyword>
<keyword id="KW-0945">Host-virus interaction</keyword>
<keyword id="KW-0488">Methylation</keyword>
<keyword id="KW-0509">mRNA transport</keyword>
<keyword id="KW-0597">Phosphoprotein</keyword>
<keyword id="KW-1185">Reference proteome</keyword>
<keyword id="KW-0694">RNA-binding</keyword>
<keyword id="KW-0813">Transport</keyword>
<sequence length="103" mass="11649">MAGRSGVNDEELLRAIRVIKILYQSNPYPNDSGTRQARKNRRRRWRARQRQIRALSERILSSCVGGLQEPSTLPLPPLDRLSLNPEEDLGTSETEHPQGTATT</sequence>
<protein>
    <recommendedName>
        <fullName evidence="1">Protein Rev</fullName>
    </recommendedName>
    <alternativeName>
        <fullName evidence="1">ART/TRS</fullName>
    </alternativeName>
    <alternativeName>
        <fullName evidence="1">Anti-repression transactivator</fullName>
    </alternativeName>
    <alternativeName>
        <fullName evidence="1">Regulator of expression of viral proteins</fullName>
    </alternativeName>
</protein>
<feature type="chain" id="PRO_0000249345" description="Protein Rev">
    <location>
        <begin position="1"/>
        <end position="103"/>
    </location>
</feature>
<feature type="region of interest" description="Homomultimerization" evidence="1">
    <location>
        <begin position="18"/>
        <end position="26"/>
    </location>
</feature>
<feature type="region of interest" description="Disordered" evidence="2">
    <location>
        <begin position="25"/>
        <end position="48"/>
    </location>
</feature>
<feature type="region of interest" description="Disordered" evidence="2">
    <location>
        <begin position="66"/>
        <end position="103"/>
    </location>
</feature>
<feature type="short sequence motif" description="Nuclear localization signal and RNA-binding (RRE)" evidence="1">
    <location>
        <begin position="34"/>
        <end position="50"/>
    </location>
</feature>
<feature type="short sequence motif" description="Nuclear export signal and binding to XPO1" evidence="1">
    <location>
        <begin position="73"/>
        <end position="84"/>
    </location>
</feature>
<feature type="compositionally biased region" description="Polar residues" evidence="2">
    <location>
        <begin position="25"/>
        <end position="34"/>
    </location>
</feature>
<feature type="compositionally biased region" description="Basic residues" evidence="2">
    <location>
        <begin position="36"/>
        <end position="48"/>
    </location>
</feature>
<feature type="modified residue" description="Phosphoserine; by host CK2" evidence="1">
    <location>
        <position position="5"/>
    </location>
</feature>
<feature type="modified residue" description="Phosphoserine; by host" evidence="1">
    <location>
        <position position="92"/>
    </location>
</feature>
<reference key="1">
    <citation type="journal article" date="2006" name="Science">
        <title>Chimpanzee reservoirs of pandemic and nonpandemic HIV-1.</title>
        <authorList>
            <person name="Keele B.F."/>
            <person name="Van Heuverswyn F."/>
            <person name="Li Y."/>
            <person name="Bailes E."/>
            <person name="Takehisa J."/>
            <person name="Santiago M.L."/>
            <person name="Bibollet-Ruche F."/>
            <person name="Chen Y."/>
            <person name="Wain L.V."/>
            <person name="Liegeois F."/>
            <person name="Loul S."/>
            <person name="Ngole E.M."/>
            <person name="Bienvenue Y."/>
            <person name="Delaporte E."/>
            <person name="Brookfield J.F."/>
            <person name="Sharp P.M."/>
            <person name="Shaw G.M."/>
            <person name="Peeters M."/>
            <person name="Hahn B.H."/>
        </authorList>
    </citation>
    <scope>NUCLEOTIDE SEQUENCE [GENOMIC RNA]</scope>
</reference>
<comment type="function">
    <text evidence="1">Escorts unspliced or incompletely spliced viral pre-mRNAs (late transcripts) out of the nucleus of infected cells. These pre-mRNAs carry a recognition sequence called Rev responsive element (RRE) located in the env gene, that is not present in fully spliced viral mRNAs (early transcripts). This function is essential since most viral proteins are translated from unspliced or partially spliced pre-mRNAs which cannot exit the nucleus by the pathway used by fully processed cellular mRNAs. Rev itself is translated from a fully spliced mRNA that readily exits the nucleus. Rev's nuclear localization signal (NLS) binds directly to KPNB1/Importin beta-1 without previous binding to KPNA1/Importin alpha-1. KPNB1 binds to the GDP bound form of RAN (Ran-GDP) and targets Rev to the nucleus. In the nucleus, the conversion from Ran-GDP to Ran-GTP dissociates Rev from KPNB1 and allows Rev's binding to the RRE in viral pre-mRNAs. Rev multimerization on the RRE via cooperative assembly exposes its nuclear export signal (NES) to the surface. Rev can then form a complex with XPO1/CRM1 and Ran-GTP, leading to nuclear export of the complex. Conversion from Ran-GTP to Ran-GDP mediates dissociation of the Rev/RRE/XPO1/RAN complex, so that Rev can return to the nucleus for a subsequent round of export. Beside KPNB1, also seems to interact with TNPO1/Transportin-1, RANBP5/IPO5 and IPO7/RANBP7 for nuclear import. The nucleoporin-like HRB/RIP is an essential cofactor that probably indirectly interacts with Rev to release HIV RNAs from the perinuclear region to the cytoplasm.</text>
</comment>
<comment type="subunit">
    <text evidence="1">Homomultimer; when bound to the RRE. Multimeric assembly is essential for activity and may involve XPO1. Binds to human KPNB1, XPO1, TNPO1, RANBP5 and IPO7. Interacts with the viral Integrase. Interacts with human KHDRBS1. Interacts with human NAP1; this interaction decreases Rev multimerization and stimulates its activity. Interacts with human DEAD-box helicases DDX3 and DDX24; these interactions may serve for viral RNA export to the cytoplasm and packaging, respectively. Interacts with human PSIP1; this interaction may inhibit HIV-1 DNA integration by promoting dissociation of the Integrase-LEDGF/p75 complex.</text>
</comment>
<comment type="subcellular location">
    <subcellularLocation>
        <location evidence="1">Host nucleus</location>
        <location evidence="1">Host nucleolus</location>
    </subcellularLocation>
    <subcellularLocation>
        <location evidence="1">Host cytoplasm</location>
    </subcellularLocation>
    <text evidence="1">The presence of both nuclear import and nuclear export signals leads to continuous shuttling between the nucleus and cytoplasm.</text>
</comment>
<comment type="domain">
    <text evidence="1">The RNA-binding motif binds to the RRE, a 240 bp stem-and-loop structure present in incompletely spliced viral pre-mRNAs. This region also contains the NLS which mediates nuclear localization via KPNB1 binding and, when the N-terminal sequence is present, nucleolar targeting. These overlapping functions prevent Rev bound to RRE from undesirable return to the nucleus. When Rev binds the RRE, the NLS becomes masked while the NES remains accessible. The leucine-rich NES mediates binding to human XPO1.</text>
</comment>
<comment type="PTM">
    <text evidence="1">Asymmetrically arginine dimethylated at one site by host PRMT6. Methylation impairs the RNA-binding activity and export of viral RNA from the nucleus to the cytoplasm.</text>
</comment>
<comment type="PTM">
    <text evidence="1">Phosphorylated by protein kinase CK2. Presence of, and maybe binding to the N-terminus of the regulatory beta subunit of CK2 is necessary for CK2-mediated Rev's phosphorylation.</text>
</comment>
<comment type="miscellaneous">
    <text evidence="1">HIV-1 lineages are divided in three main groups, M (for Major), O (for Outlier), and N (for New, or Non-M, Non-O). The vast majority of strains found worldwide belong to the group M. Group O seems to be endemic to and largely confined to Cameroon and neighboring countries in West Central Africa, where these viruses represent a small minority of HIV-1 strains. The group N is represented by a limited number of isolates from Cameroonian persons. The group M is further subdivided in 9 clades or subtypes (A to D, F to H, J and K).</text>
</comment>
<comment type="similarity">
    <text evidence="1">Belongs to the HIV-1 REV protein family.</text>
</comment>
<name>REV_SIVEK</name>
<organism>
    <name type="scientific">Simian immunodeficiency virus (isolate EK505)</name>
    <name type="common">SIV-cpz</name>
    <name type="synonym">Chimpanzee immunodeficiency virus</name>
    <dbReference type="NCBI Taxonomy" id="388912"/>
    <lineage>
        <taxon>Viruses</taxon>
        <taxon>Riboviria</taxon>
        <taxon>Pararnavirae</taxon>
        <taxon>Artverviricota</taxon>
        <taxon>Revtraviricetes</taxon>
        <taxon>Ortervirales</taxon>
        <taxon>Retroviridae</taxon>
        <taxon>Orthoretrovirinae</taxon>
        <taxon>Lentivirus</taxon>
        <taxon>Simian immunodeficiency virus</taxon>
    </lineage>
</organism>
<accession>Q1A245</accession>
<evidence type="ECO:0000255" key="1">
    <source>
        <dbReference type="HAMAP-Rule" id="MF_04077"/>
    </source>
</evidence>
<evidence type="ECO:0000256" key="2">
    <source>
        <dbReference type="SAM" id="MobiDB-lite"/>
    </source>
</evidence>